<comment type="function">
    <text evidence="1">Involved in DNA repair and in homologous recombination. Binds and assemble on single-stranded DNA to form a nucleoprotein filament. Hydrolyzes ATP in a ssDNA-dependent manner and promotes DNA strand exchange between homologous DNA molecules.</text>
</comment>
<comment type="similarity">
    <text evidence="1">Belongs to the eukaryotic RecA-like protein family.</text>
</comment>
<dbReference type="EMBL" id="CP000816">
    <property type="protein sequence ID" value="ABU82185.1"/>
    <property type="molecule type" value="Genomic_DNA"/>
</dbReference>
<dbReference type="RefSeq" id="WP_012123149.1">
    <property type="nucleotide sequence ID" value="NC_009776.1"/>
</dbReference>
<dbReference type="SMR" id="A8AB83"/>
<dbReference type="STRING" id="453591.Igni_1006"/>
<dbReference type="GeneID" id="5563025"/>
<dbReference type="KEGG" id="iho:Igni_1006"/>
<dbReference type="eggNOG" id="arCOG00415">
    <property type="taxonomic scope" value="Archaea"/>
</dbReference>
<dbReference type="HOGENOM" id="CLU_041732_0_0_2"/>
<dbReference type="OrthoDB" id="31129at2157"/>
<dbReference type="PhylomeDB" id="A8AB83"/>
<dbReference type="Proteomes" id="UP000000262">
    <property type="component" value="Chromosome"/>
</dbReference>
<dbReference type="GO" id="GO:0005524">
    <property type="term" value="F:ATP binding"/>
    <property type="evidence" value="ECO:0007669"/>
    <property type="project" value="UniProtKB-UniRule"/>
</dbReference>
<dbReference type="GO" id="GO:0016887">
    <property type="term" value="F:ATP hydrolysis activity"/>
    <property type="evidence" value="ECO:0007669"/>
    <property type="project" value="InterPro"/>
</dbReference>
<dbReference type="GO" id="GO:0140664">
    <property type="term" value="F:ATP-dependent DNA damage sensor activity"/>
    <property type="evidence" value="ECO:0007669"/>
    <property type="project" value="InterPro"/>
</dbReference>
<dbReference type="GO" id="GO:0003684">
    <property type="term" value="F:damaged DNA binding"/>
    <property type="evidence" value="ECO:0007669"/>
    <property type="project" value="UniProtKB-UniRule"/>
</dbReference>
<dbReference type="GO" id="GO:0006310">
    <property type="term" value="P:DNA recombination"/>
    <property type="evidence" value="ECO:0007669"/>
    <property type="project" value="UniProtKB-UniRule"/>
</dbReference>
<dbReference type="GO" id="GO:0006281">
    <property type="term" value="P:DNA repair"/>
    <property type="evidence" value="ECO:0007669"/>
    <property type="project" value="UniProtKB-UniRule"/>
</dbReference>
<dbReference type="CDD" id="cd19515">
    <property type="entry name" value="archRadA"/>
    <property type="match status" value="1"/>
</dbReference>
<dbReference type="FunFam" id="3.40.50.300:FF:002052">
    <property type="entry name" value="DNA repair protein RAD51 homolog"/>
    <property type="match status" value="1"/>
</dbReference>
<dbReference type="Gene3D" id="1.10.150.20">
    <property type="entry name" value="5' to 3' exonuclease, C-terminal subdomain"/>
    <property type="match status" value="1"/>
</dbReference>
<dbReference type="Gene3D" id="3.40.50.300">
    <property type="entry name" value="P-loop containing nucleotide triphosphate hydrolases"/>
    <property type="match status" value="1"/>
</dbReference>
<dbReference type="HAMAP" id="MF_00348">
    <property type="entry name" value="RadA_arch"/>
    <property type="match status" value="1"/>
</dbReference>
<dbReference type="InterPro" id="IPR003593">
    <property type="entry name" value="AAA+_ATPase"/>
</dbReference>
<dbReference type="InterPro" id="IPR013632">
    <property type="entry name" value="DNA_recomb/repair_Rad51_C"/>
</dbReference>
<dbReference type="InterPro" id="IPR011938">
    <property type="entry name" value="DNA_recomb/repair_RadA"/>
</dbReference>
<dbReference type="InterPro" id="IPR016467">
    <property type="entry name" value="DNA_recomb/repair_RecA-like"/>
</dbReference>
<dbReference type="InterPro" id="IPR010995">
    <property type="entry name" value="DNA_repair_Rad51/TF_NusA_a-hlx"/>
</dbReference>
<dbReference type="InterPro" id="IPR027417">
    <property type="entry name" value="P-loop_NTPase"/>
</dbReference>
<dbReference type="InterPro" id="IPR020588">
    <property type="entry name" value="RecA_ATP-bd"/>
</dbReference>
<dbReference type="InterPro" id="IPR020587">
    <property type="entry name" value="RecA_monomer-monomer_interface"/>
</dbReference>
<dbReference type="NCBIfam" id="NF003301">
    <property type="entry name" value="PRK04301.1"/>
    <property type="match status" value="1"/>
</dbReference>
<dbReference type="NCBIfam" id="TIGR02236">
    <property type="entry name" value="recomb_radA"/>
    <property type="match status" value="1"/>
</dbReference>
<dbReference type="PANTHER" id="PTHR22942:SF30">
    <property type="entry name" value="MEIOTIC RECOMBINATION PROTEIN DMC1_LIM15 HOMOLOG"/>
    <property type="match status" value="1"/>
</dbReference>
<dbReference type="PANTHER" id="PTHR22942">
    <property type="entry name" value="RECA/RAD51/RADA DNA STRAND-PAIRING FAMILY MEMBER"/>
    <property type="match status" value="1"/>
</dbReference>
<dbReference type="Pfam" id="PF14520">
    <property type="entry name" value="HHH_5"/>
    <property type="match status" value="1"/>
</dbReference>
<dbReference type="Pfam" id="PF08423">
    <property type="entry name" value="Rad51"/>
    <property type="match status" value="1"/>
</dbReference>
<dbReference type="PIRSF" id="PIRSF005856">
    <property type="entry name" value="Rad51"/>
    <property type="match status" value="1"/>
</dbReference>
<dbReference type="SMART" id="SM00382">
    <property type="entry name" value="AAA"/>
    <property type="match status" value="1"/>
</dbReference>
<dbReference type="SUPFAM" id="SSF52540">
    <property type="entry name" value="P-loop containing nucleoside triphosphate hydrolases"/>
    <property type="match status" value="1"/>
</dbReference>
<dbReference type="SUPFAM" id="SSF47794">
    <property type="entry name" value="Rad51 N-terminal domain-like"/>
    <property type="match status" value="1"/>
</dbReference>
<dbReference type="PROSITE" id="PS50162">
    <property type="entry name" value="RECA_2"/>
    <property type="match status" value="1"/>
</dbReference>
<dbReference type="PROSITE" id="PS50163">
    <property type="entry name" value="RECA_3"/>
    <property type="match status" value="1"/>
</dbReference>
<organism>
    <name type="scientific">Ignicoccus hospitalis (strain KIN4/I / DSM 18386 / JCM 14125)</name>
    <dbReference type="NCBI Taxonomy" id="453591"/>
    <lineage>
        <taxon>Archaea</taxon>
        <taxon>Thermoproteota</taxon>
        <taxon>Thermoprotei</taxon>
        <taxon>Desulfurococcales</taxon>
        <taxon>Desulfurococcaceae</taxon>
        <taxon>Ignicoccus</taxon>
    </lineage>
</organism>
<accession>A8AB83</accession>
<reference key="1">
    <citation type="journal article" date="2008" name="Genome Biol.">
        <title>A genomic analysis of the archaeal system Ignicoccus hospitalis-Nanoarchaeum equitans.</title>
        <authorList>
            <person name="Podar M."/>
            <person name="Anderson I."/>
            <person name="Makarova K.S."/>
            <person name="Elkins J.G."/>
            <person name="Ivanova N."/>
            <person name="Wall M.A."/>
            <person name="Lykidis A."/>
            <person name="Mavromatis K."/>
            <person name="Sun H."/>
            <person name="Hudson M.E."/>
            <person name="Chen W."/>
            <person name="Deciu C."/>
            <person name="Hutchison D."/>
            <person name="Eads J.R."/>
            <person name="Anderson A."/>
            <person name="Fernandes F."/>
            <person name="Szeto E."/>
            <person name="Lapidus A."/>
            <person name="Kyrpides N.C."/>
            <person name="Saier M.H. Jr."/>
            <person name="Richardson P.M."/>
            <person name="Rachel R."/>
            <person name="Huber H."/>
            <person name="Eisen J.A."/>
            <person name="Koonin E.V."/>
            <person name="Keller M."/>
            <person name="Stetter K.O."/>
        </authorList>
    </citation>
    <scope>NUCLEOTIDE SEQUENCE [LARGE SCALE GENOMIC DNA]</scope>
    <source>
        <strain>KIN4/I / DSM 18386 / JCM 14125</strain>
    </source>
</reference>
<protein>
    <recommendedName>
        <fullName evidence="1">DNA repair and recombination protein RadA</fullName>
    </recommendedName>
</protein>
<evidence type="ECO:0000255" key="1">
    <source>
        <dbReference type="HAMAP-Rule" id="MF_00348"/>
    </source>
</evidence>
<sequence length="327" mass="35906">MGQVATEEKRPTSVAELPGVGPSTAAKLIDAGYGTIEALAVATPEELVAIGIPLTTAQKIIRAARQMLDIRFRTAKEVKLERMNLRKITTGSKNLDDLLGGGIETKTITEFFGEFGSGKSQLCHQASVNVQLPLEQGGLSEGDKVAKAVYVDTEGTFRWERIEQMAKCLGLDPDQVMDNIYYIRAVNSDHQMAIVEELFNLVPKENVKLIVVDSVTSHFRAEYPGRENLAVRQQKLNKHLHQLGKLAEVYNTAVIITNQVMARPDVFYGDPTQAVGGHVLYHAPGVRVQLKKARGNKRIARVVDAPHLPEAEAVFAITDCGIRDPED</sequence>
<gene>
    <name evidence="1" type="primary">radA</name>
    <name type="ordered locus">Igni_1006</name>
</gene>
<proteinExistence type="inferred from homology"/>
<feature type="chain" id="PRO_1000048384" description="DNA repair and recombination protein RadA">
    <location>
        <begin position="1"/>
        <end position="327"/>
    </location>
</feature>
<feature type="binding site" evidence="1">
    <location>
        <begin position="113"/>
        <end position="120"/>
    </location>
    <ligand>
        <name>ATP</name>
        <dbReference type="ChEBI" id="CHEBI:30616"/>
    </ligand>
</feature>
<name>RADA_IGNH4</name>
<keyword id="KW-0067">ATP-binding</keyword>
<keyword id="KW-0227">DNA damage</keyword>
<keyword id="KW-0233">DNA recombination</keyword>
<keyword id="KW-0238">DNA-binding</keyword>
<keyword id="KW-0547">Nucleotide-binding</keyword>
<keyword id="KW-1185">Reference proteome</keyword>